<reference key="1">
    <citation type="submission" date="2008-06" db="EMBL/GenBank/DDBJ databases">
        <title>Complete sequence of chromosome of Prosthecochloris aestuarii DSM 271.</title>
        <authorList>
            <consortium name="US DOE Joint Genome Institute"/>
            <person name="Lucas S."/>
            <person name="Copeland A."/>
            <person name="Lapidus A."/>
            <person name="Glavina del Rio T."/>
            <person name="Dalin E."/>
            <person name="Tice H."/>
            <person name="Bruce D."/>
            <person name="Goodwin L."/>
            <person name="Pitluck S."/>
            <person name="Schmutz J."/>
            <person name="Larimer F."/>
            <person name="Land M."/>
            <person name="Hauser L."/>
            <person name="Kyrpides N."/>
            <person name="Anderson I."/>
            <person name="Liu Z."/>
            <person name="Li T."/>
            <person name="Zhao F."/>
            <person name="Overmann J."/>
            <person name="Bryant D.A."/>
            <person name="Richardson P."/>
        </authorList>
    </citation>
    <scope>NUCLEOTIDE SEQUENCE [LARGE SCALE GENOMIC DNA]</scope>
    <source>
        <strain>DSM 271 / SK 413</strain>
    </source>
</reference>
<comment type="function">
    <text evidence="1">Protease subunit of a proteasome-like degradation complex believed to be a general protein degrading machinery.</text>
</comment>
<comment type="catalytic activity">
    <reaction evidence="1">
        <text>ATP-dependent cleavage of peptide bonds with broad specificity.</text>
        <dbReference type="EC" id="3.4.25.2"/>
    </reaction>
</comment>
<comment type="activity regulation">
    <text evidence="1">Allosterically activated by HslU binding.</text>
</comment>
<comment type="subunit">
    <text evidence="1">A double ring-shaped homohexamer of HslV is capped on each side by a ring-shaped HslU homohexamer. The assembly of the HslU/HslV complex is dependent on binding of ATP.</text>
</comment>
<comment type="subcellular location">
    <subcellularLocation>
        <location evidence="1">Cytoplasm</location>
    </subcellularLocation>
</comment>
<comment type="similarity">
    <text evidence="1">Belongs to the peptidase T1B family. HslV subfamily.</text>
</comment>
<gene>
    <name evidence="1" type="primary">hslV</name>
    <name type="ordered locus">Paes_1175</name>
</gene>
<sequence>MNRSEKPQLRATTVLGVIRNGKAALGSDGQMTLGNTVIKHSTKKIRRIQHANLITGFAGATADAVTLLDRFDEKLQAFGGQLERSAVELARDWRTDKYLRRLEAMLAVVSADKALIISGTGDVIEPEDGIVAIGSGSMYALSAARALIRYTDLSAREIVTESLKIAADICIYTNDHIVVEEV</sequence>
<name>HSLV_PROA2</name>
<protein>
    <recommendedName>
        <fullName evidence="1">ATP-dependent protease subunit HslV</fullName>
        <ecNumber evidence="1">3.4.25.2</ecNumber>
    </recommendedName>
</protein>
<feature type="chain" id="PRO_1000100903" description="ATP-dependent protease subunit HslV">
    <location>
        <begin position="1"/>
        <end position="182"/>
    </location>
</feature>
<feature type="active site" evidence="1">
    <location>
        <position position="12"/>
    </location>
</feature>
<feature type="binding site" evidence="1">
    <location>
        <position position="167"/>
    </location>
    <ligand>
        <name>Na(+)</name>
        <dbReference type="ChEBI" id="CHEBI:29101"/>
    </ligand>
</feature>
<feature type="binding site" evidence="1">
    <location>
        <position position="170"/>
    </location>
    <ligand>
        <name>Na(+)</name>
        <dbReference type="ChEBI" id="CHEBI:29101"/>
    </ligand>
</feature>
<feature type="binding site" evidence="1">
    <location>
        <position position="173"/>
    </location>
    <ligand>
        <name>Na(+)</name>
        <dbReference type="ChEBI" id="CHEBI:29101"/>
    </ligand>
</feature>
<proteinExistence type="inferred from homology"/>
<accession>B4S817</accession>
<evidence type="ECO:0000255" key="1">
    <source>
        <dbReference type="HAMAP-Rule" id="MF_00248"/>
    </source>
</evidence>
<keyword id="KW-0021">Allosteric enzyme</keyword>
<keyword id="KW-0963">Cytoplasm</keyword>
<keyword id="KW-0378">Hydrolase</keyword>
<keyword id="KW-0479">Metal-binding</keyword>
<keyword id="KW-0645">Protease</keyword>
<keyword id="KW-0915">Sodium</keyword>
<keyword id="KW-0888">Threonine protease</keyword>
<dbReference type="EC" id="3.4.25.2" evidence="1"/>
<dbReference type="EMBL" id="CP001108">
    <property type="protein sequence ID" value="ACF46204.1"/>
    <property type="molecule type" value="Genomic_DNA"/>
</dbReference>
<dbReference type="RefSeq" id="WP_012505739.1">
    <property type="nucleotide sequence ID" value="NC_011059.1"/>
</dbReference>
<dbReference type="SMR" id="B4S817"/>
<dbReference type="STRING" id="290512.Paes_1175"/>
<dbReference type="KEGG" id="paa:Paes_1175"/>
<dbReference type="eggNOG" id="COG5405">
    <property type="taxonomic scope" value="Bacteria"/>
</dbReference>
<dbReference type="HOGENOM" id="CLU_093872_1_0_10"/>
<dbReference type="Proteomes" id="UP000002725">
    <property type="component" value="Chromosome"/>
</dbReference>
<dbReference type="GO" id="GO:0009376">
    <property type="term" value="C:HslUV protease complex"/>
    <property type="evidence" value="ECO:0007669"/>
    <property type="project" value="UniProtKB-UniRule"/>
</dbReference>
<dbReference type="GO" id="GO:0005839">
    <property type="term" value="C:proteasome core complex"/>
    <property type="evidence" value="ECO:0007669"/>
    <property type="project" value="InterPro"/>
</dbReference>
<dbReference type="GO" id="GO:0046872">
    <property type="term" value="F:metal ion binding"/>
    <property type="evidence" value="ECO:0007669"/>
    <property type="project" value="UniProtKB-KW"/>
</dbReference>
<dbReference type="GO" id="GO:0004298">
    <property type="term" value="F:threonine-type endopeptidase activity"/>
    <property type="evidence" value="ECO:0007669"/>
    <property type="project" value="UniProtKB-KW"/>
</dbReference>
<dbReference type="GO" id="GO:0051603">
    <property type="term" value="P:proteolysis involved in protein catabolic process"/>
    <property type="evidence" value="ECO:0007669"/>
    <property type="project" value="InterPro"/>
</dbReference>
<dbReference type="CDD" id="cd01913">
    <property type="entry name" value="protease_HslV"/>
    <property type="match status" value="1"/>
</dbReference>
<dbReference type="Gene3D" id="3.60.20.10">
    <property type="entry name" value="Glutamine Phosphoribosylpyrophosphate, subunit 1, domain 1"/>
    <property type="match status" value="1"/>
</dbReference>
<dbReference type="HAMAP" id="MF_00248">
    <property type="entry name" value="HslV"/>
    <property type="match status" value="1"/>
</dbReference>
<dbReference type="InterPro" id="IPR022281">
    <property type="entry name" value="ATP-dep_Prtase_HsIV_su"/>
</dbReference>
<dbReference type="InterPro" id="IPR029055">
    <property type="entry name" value="Ntn_hydrolases_N"/>
</dbReference>
<dbReference type="InterPro" id="IPR001353">
    <property type="entry name" value="Proteasome_sua/b"/>
</dbReference>
<dbReference type="InterPro" id="IPR023333">
    <property type="entry name" value="Proteasome_suB-type"/>
</dbReference>
<dbReference type="NCBIfam" id="TIGR03692">
    <property type="entry name" value="ATP_dep_HslV"/>
    <property type="match status" value="1"/>
</dbReference>
<dbReference type="NCBIfam" id="NF003964">
    <property type="entry name" value="PRK05456.1"/>
    <property type="match status" value="1"/>
</dbReference>
<dbReference type="PANTHER" id="PTHR32194:SF0">
    <property type="entry name" value="ATP-DEPENDENT PROTEASE SUBUNIT HSLV"/>
    <property type="match status" value="1"/>
</dbReference>
<dbReference type="PANTHER" id="PTHR32194">
    <property type="entry name" value="METALLOPROTEASE TLDD"/>
    <property type="match status" value="1"/>
</dbReference>
<dbReference type="Pfam" id="PF00227">
    <property type="entry name" value="Proteasome"/>
    <property type="match status" value="1"/>
</dbReference>
<dbReference type="PIRSF" id="PIRSF039093">
    <property type="entry name" value="HslV"/>
    <property type="match status" value="1"/>
</dbReference>
<dbReference type="SUPFAM" id="SSF56235">
    <property type="entry name" value="N-terminal nucleophile aminohydrolases (Ntn hydrolases)"/>
    <property type="match status" value="1"/>
</dbReference>
<dbReference type="PROSITE" id="PS51476">
    <property type="entry name" value="PROTEASOME_BETA_2"/>
    <property type="match status" value="1"/>
</dbReference>
<organism>
    <name type="scientific">Prosthecochloris aestuarii (strain DSM 271 / SK 413)</name>
    <dbReference type="NCBI Taxonomy" id="290512"/>
    <lineage>
        <taxon>Bacteria</taxon>
        <taxon>Pseudomonadati</taxon>
        <taxon>Chlorobiota</taxon>
        <taxon>Chlorobiia</taxon>
        <taxon>Chlorobiales</taxon>
        <taxon>Chlorobiaceae</taxon>
        <taxon>Prosthecochloris</taxon>
    </lineage>
</organism>